<comment type="function">
    <text evidence="1">Catalyzes the final step of fatty acid oxidation in which acetyl-CoA is released and the CoA ester of a fatty acid two carbons shorter is formed.</text>
</comment>
<comment type="catalytic activity">
    <reaction evidence="1">
        <text>an acyl-CoA + acetyl-CoA = a 3-oxoacyl-CoA + CoA</text>
        <dbReference type="Rhea" id="RHEA:21564"/>
        <dbReference type="ChEBI" id="CHEBI:57287"/>
        <dbReference type="ChEBI" id="CHEBI:57288"/>
        <dbReference type="ChEBI" id="CHEBI:58342"/>
        <dbReference type="ChEBI" id="CHEBI:90726"/>
        <dbReference type="EC" id="2.3.1.16"/>
    </reaction>
</comment>
<comment type="pathway">
    <text evidence="1">Lipid metabolism; fatty acid beta-oxidation.</text>
</comment>
<comment type="subunit">
    <text evidence="1">Heterotetramer of two alpha chains (FadJ) and two beta chains (FadI).</text>
</comment>
<comment type="subcellular location">
    <subcellularLocation>
        <location evidence="1">Cytoplasm</location>
    </subcellularLocation>
</comment>
<comment type="similarity">
    <text evidence="1">Belongs to the thiolase-like superfamily. Thiolase family.</text>
</comment>
<protein>
    <recommendedName>
        <fullName evidence="1">3-ketoacyl-CoA thiolase</fullName>
        <ecNumber evidence="1">2.3.1.16</ecNumber>
    </recommendedName>
    <alternativeName>
        <fullName evidence="1">ACSs</fullName>
    </alternativeName>
    <alternativeName>
        <fullName evidence="1">Acetyl-CoA acyltransferase</fullName>
    </alternativeName>
    <alternativeName>
        <fullName evidence="1">Acyl-CoA ligase</fullName>
    </alternativeName>
    <alternativeName>
        <fullName evidence="1">Beta-ketothiolase</fullName>
    </alternativeName>
    <alternativeName>
        <fullName evidence="1">Fatty acid oxidation complex subunit beta</fullName>
    </alternativeName>
</protein>
<gene>
    <name evidence="1" type="primary">fadI</name>
    <name type="ordered locus">PSHAa0966</name>
</gene>
<dbReference type="EC" id="2.3.1.16" evidence="1"/>
<dbReference type="EMBL" id="CR954246">
    <property type="protein sequence ID" value="CAI86044.1"/>
    <property type="molecule type" value="Genomic_DNA"/>
</dbReference>
<dbReference type="SMR" id="Q3IEE3"/>
<dbReference type="STRING" id="326442.PSHAa0966"/>
<dbReference type="KEGG" id="pha:PSHAa0966"/>
<dbReference type="PATRIC" id="fig|326442.8.peg.926"/>
<dbReference type="eggNOG" id="COG0183">
    <property type="taxonomic scope" value="Bacteria"/>
</dbReference>
<dbReference type="HOGENOM" id="CLU_031026_2_0_6"/>
<dbReference type="BioCyc" id="PHAL326442:PSHA_RS04710-MONOMER"/>
<dbReference type="UniPathway" id="UPA00659"/>
<dbReference type="Proteomes" id="UP000006843">
    <property type="component" value="Chromosome I"/>
</dbReference>
<dbReference type="GO" id="GO:0005829">
    <property type="term" value="C:cytosol"/>
    <property type="evidence" value="ECO:0007669"/>
    <property type="project" value="TreeGrafter"/>
</dbReference>
<dbReference type="GO" id="GO:0003988">
    <property type="term" value="F:acetyl-CoA C-acyltransferase activity"/>
    <property type="evidence" value="ECO:0007669"/>
    <property type="project" value="UniProtKB-UniRule"/>
</dbReference>
<dbReference type="GO" id="GO:0006635">
    <property type="term" value="P:fatty acid beta-oxidation"/>
    <property type="evidence" value="ECO:0007669"/>
    <property type="project" value="UniProtKB-UniRule"/>
</dbReference>
<dbReference type="CDD" id="cd00751">
    <property type="entry name" value="thiolase"/>
    <property type="match status" value="1"/>
</dbReference>
<dbReference type="FunFam" id="3.40.47.10:FF:000011">
    <property type="entry name" value="3-ketoacyl-CoA thiolase"/>
    <property type="match status" value="1"/>
</dbReference>
<dbReference type="Gene3D" id="3.40.47.10">
    <property type="match status" value="1"/>
</dbReference>
<dbReference type="HAMAP" id="MF_01618">
    <property type="entry name" value="FadI"/>
    <property type="match status" value="1"/>
</dbReference>
<dbReference type="InterPro" id="IPR050521">
    <property type="entry name" value="3-ketoacyl-CoA_Thiolase"/>
</dbReference>
<dbReference type="InterPro" id="IPR012806">
    <property type="entry name" value="Ac-CoA_C-AcTrfase_FadI"/>
</dbReference>
<dbReference type="InterPro" id="IPR002155">
    <property type="entry name" value="Thiolase"/>
</dbReference>
<dbReference type="InterPro" id="IPR016039">
    <property type="entry name" value="Thiolase-like"/>
</dbReference>
<dbReference type="InterPro" id="IPR020615">
    <property type="entry name" value="Thiolase_acyl_enz_int_AS"/>
</dbReference>
<dbReference type="InterPro" id="IPR020610">
    <property type="entry name" value="Thiolase_AS"/>
</dbReference>
<dbReference type="InterPro" id="IPR020617">
    <property type="entry name" value="Thiolase_C"/>
</dbReference>
<dbReference type="InterPro" id="IPR020613">
    <property type="entry name" value="Thiolase_CS"/>
</dbReference>
<dbReference type="InterPro" id="IPR020616">
    <property type="entry name" value="Thiolase_N"/>
</dbReference>
<dbReference type="NCBIfam" id="TIGR01930">
    <property type="entry name" value="AcCoA-C-Actrans"/>
    <property type="match status" value="1"/>
</dbReference>
<dbReference type="NCBIfam" id="TIGR02446">
    <property type="entry name" value="FadI"/>
    <property type="match status" value="1"/>
</dbReference>
<dbReference type="NCBIfam" id="NF006516">
    <property type="entry name" value="PRK08963.1"/>
    <property type="match status" value="1"/>
</dbReference>
<dbReference type="PANTHER" id="PTHR42689">
    <property type="entry name" value="ACETYL-COA ACYLTRANSFERASE FADA2 (3-KETOACYL-COA THIOLASE) (BETA-KETOTHIOLASE)-RELATED"/>
    <property type="match status" value="1"/>
</dbReference>
<dbReference type="PANTHER" id="PTHR42689:SF1">
    <property type="entry name" value="ACETYL-COA ACYLTRANSFERASE FADA2 (3-KETOACYL-COA THIOLASE) (BETA-KETOTHIOLASE)-RELATED"/>
    <property type="match status" value="1"/>
</dbReference>
<dbReference type="Pfam" id="PF02803">
    <property type="entry name" value="Thiolase_C"/>
    <property type="match status" value="1"/>
</dbReference>
<dbReference type="Pfam" id="PF00108">
    <property type="entry name" value="Thiolase_N"/>
    <property type="match status" value="1"/>
</dbReference>
<dbReference type="PIRSF" id="PIRSF000429">
    <property type="entry name" value="Ac-CoA_Ac_transf"/>
    <property type="match status" value="1"/>
</dbReference>
<dbReference type="SUPFAM" id="SSF53901">
    <property type="entry name" value="Thiolase-like"/>
    <property type="match status" value="2"/>
</dbReference>
<dbReference type="PROSITE" id="PS00098">
    <property type="entry name" value="THIOLASE_1"/>
    <property type="match status" value="1"/>
</dbReference>
<dbReference type="PROSITE" id="PS00737">
    <property type="entry name" value="THIOLASE_2"/>
    <property type="match status" value="1"/>
</dbReference>
<dbReference type="PROSITE" id="PS00099">
    <property type="entry name" value="THIOLASE_3"/>
    <property type="match status" value="1"/>
</dbReference>
<keyword id="KW-0012">Acyltransferase</keyword>
<keyword id="KW-0963">Cytoplasm</keyword>
<keyword id="KW-0276">Fatty acid metabolism</keyword>
<keyword id="KW-0442">Lipid degradation</keyword>
<keyword id="KW-0443">Lipid metabolism</keyword>
<keyword id="KW-1185">Reference proteome</keyword>
<keyword id="KW-0808">Transferase</keyword>
<organism>
    <name type="scientific">Pseudoalteromonas translucida (strain TAC 125)</name>
    <dbReference type="NCBI Taxonomy" id="326442"/>
    <lineage>
        <taxon>Bacteria</taxon>
        <taxon>Pseudomonadati</taxon>
        <taxon>Pseudomonadota</taxon>
        <taxon>Gammaproteobacteria</taxon>
        <taxon>Alteromonadales</taxon>
        <taxon>Pseudoalteromonadaceae</taxon>
        <taxon>Pseudoalteromonas</taxon>
    </lineage>
</organism>
<sequence length="436" mass="46356">MSEQNILKTPKGDRIAIVSGLRTPFAKQATAFHHVPALDMGKLVVNEMLERLNFNKSEIDQLVFGQVVQMPEAPNIAREIVLGTGMPVSVDAYSVSRACATSFQAIANVAESIMAGSVTVGIAGGADSSSVLPIGVSKKLAGSLVDLNKARTLGQRLKIFSKLRLKDLLPVPPAVAEYSTGLSMGQTAEQMAKTHNISREDQDALAHRSHSLATQAWADGKLKDEVMTAHLPPYKSFIEEDNNIRKNSTVEGYAKLKPVFDRQHGTVTAANATPLTDGAAAVLMMSESKAKALGYEILGYVRSFAFSAIGVEKDMLMGPAHATPIALDRAGITLADLDLIEMHEAFASQTLANMKMFASDKFAQEHLGRSKAIGEINMDKFNVLGGSLAYGHPFAATGARLITQSLYELKRRGGGLALTTACAAGGLGAAFVLESA</sequence>
<name>FADI_PSET1</name>
<feature type="chain" id="PRO_1000069504" description="3-ketoacyl-CoA thiolase">
    <location>
        <begin position="1"/>
        <end position="436"/>
    </location>
</feature>
<feature type="active site" description="Acyl-thioester intermediate" evidence="1">
    <location>
        <position position="99"/>
    </location>
</feature>
<feature type="active site" description="Proton acceptor" evidence="1">
    <location>
        <position position="392"/>
    </location>
</feature>
<feature type="active site" description="Proton acceptor" evidence="1">
    <location>
        <position position="422"/>
    </location>
</feature>
<reference key="1">
    <citation type="journal article" date="2005" name="Genome Res.">
        <title>Coping with cold: the genome of the versatile marine Antarctica bacterium Pseudoalteromonas haloplanktis TAC125.</title>
        <authorList>
            <person name="Medigue C."/>
            <person name="Krin E."/>
            <person name="Pascal G."/>
            <person name="Barbe V."/>
            <person name="Bernsel A."/>
            <person name="Bertin P.N."/>
            <person name="Cheung F."/>
            <person name="Cruveiller S."/>
            <person name="D'Amico S."/>
            <person name="Duilio A."/>
            <person name="Fang G."/>
            <person name="Feller G."/>
            <person name="Ho C."/>
            <person name="Mangenot S."/>
            <person name="Marino G."/>
            <person name="Nilsson J."/>
            <person name="Parrilli E."/>
            <person name="Rocha E.P.C."/>
            <person name="Rouy Z."/>
            <person name="Sekowska A."/>
            <person name="Tutino M.L."/>
            <person name="Vallenet D."/>
            <person name="von Heijne G."/>
            <person name="Danchin A."/>
        </authorList>
    </citation>
    <scope>NUCLEOTIDE SEQUENCE [LARGE SCALE GENOMIC DNA]</scope>
    <source>
        <strain>TAC 125</strain>
    </source>
</reference>
<proteinExistence type="inferred from homology"/>
<accession>Q3IEE3</accession>
<evidence type="ECO:0000255" key="1">
    <source>
        <dbReference type="HAMAP-Rule" id="MF_01618"/>
    </source>
</evidence>